<proteinExistence type="inferred from homology"/>
<keyword id="KW-0687">Ribonucleoprotein</keyword>
<keyword id="KW-0689">Ribosomal protein</keyword>
<keyword id="KW-0694">RNA-binding</keyword>
<keyword id="KW-0699">rRNA-binding</keyword>
<dbReference type="EMBL" id="CP001019">
    <property type="protein sequence ID" value="ACJ19037.1"/>
    <property type="molecule type" value="Genomic_DNA"/>
</dbReference>
<dbReference type="RefSeq" id="WP_005771538.1">
    <property type="nucleotide sequence ID" value="NC_011527.1"/>
</dbReference>
<dbReference type="SMR" id="B6J259"/>
<dbReference type="KEGG" id="cbg:CbuG_1763"/>
<dbReference type="HOGENOM" id="CLU_144911_0_1_6"/>
<dbReference type="GO" id="GO:0005737">
    <property type="term" value="C:cytoplasm"/>
    <property type="evidence" value="ECO:0007669"/>
    <property type="project" value="UniProtKB-ARBA"/>
</dbReference>
<dbReference type="GO" id="GO:0015935">
    <property type="term" value="C:small ribosomal subunit"/>
    <property type="evidence" value="ECO:0007669"/>
    <property type="project" value="InterPro"/>
</dbReference>
<dbReference type="GO" id="GO:0019843">
    <property type="term" value="F:rRNA binding"/>
    <property type="evidence" value="ECO:0007669"/>
    <property type="project" value="UniProtKB-UniRule"/>
</dbReference>
<dbReference type="GO" id="GO:0003735">
    <property type="term" value="F:structural constituent of ribosome"/>
    <property type="evidence" value="ECO:0007669"/>
    <property type="project" value="InterPro"/>
</dbReference>
<dbReference type="GO" id="GO:0000028">
    <property type="term" value="P:ribosomal small subunit assembly"/>
    <property type="evidence" value="ECO:0007669"/>
    <property type="project" value="TreeGrafter"/>
</dbReference>
<dbReference type="GO" id="GO:0006412">
    <property type="term" value="P:translation"/>
    <property type="evidence" value="ECO:0007669"/>
    <property type="project" value="UniProtKB-UniRule"/>
</dbReference>
<dbReference type="FunFam" id="3.30.860.10:FF:000001">
    <property type="entry name" value="30S ribosomal protein S19"/>
    <property type="match status" value="1"/>
</dbReference>
<dbReference type="Gene3D" id="3.30.860.10">
    <property type="entry name" value="30s Ribosomal Protein S19, Chain A"/>
    <property type="match status" value="1"/>
</dbReference>
<dbReference type="HAMAP" id="MF_00531">
    <property type="entry name" value="Ribosomal_uS19"/>
    <property type="match status" value="1"/>
</dbReference>
<dbReference type="InterPro" id="IPR002222">
    <property type="entry name" value="Ribosomal_uS19"/>
</dbReference>
<dbReference type="InterPro" id="IPR005732">
    <property type="entry name" value="Ribosomal_uS19_bac-type"/>
</dbReference>
<dbReference type="InterPro" id="IPR020934">
    <property type="entry name" value="Ribosomal_uS19_CS"/>
</dbReference>
<dbReference type="InterPro" id="IPR023575">
    <property type="entry name" value="Ribosomal_uS19_SF"/>
</dbReference>
<dbReference type="NCBIfam" id="TIGR01050">
    <property type="entry name" value="rpsS_bact"/>
    <property type="match status" value="1"/>
</dbReference>
<dbReference type="PANTHER" id="PTHR11880">
    <property type="entry name" value="RIBOSOMAL PROTEIN S19P FAMILY MEMBER"/>
    <property type="match status" value="1"/>
</dbReference>
<dbReference type="PANTHER" id="PTHR11880:SF8">
    <property type="entry name" value="SMALL RIBOSOMAL SUBUNIT PROTEIN US19M"/>
    <property type="match status" value="1"/>
</dbReference>
<dbReference type="Pfam" id="PF00203">
    <property type="entry name" value="Ribosomal_S19"/>
    <property type="match status" value="1"/>
</dbReference>
<dbReference type="PIRSF" id="PIRSF002144">
    <property type="entry name" value="Ribosomal_S19"/>
    <property type="match status" value="1"/>
</dbReference>
<dbReference type="PRINTS" id="PR00975">
    <property type="entry name" value="RIBOSOMALS19"/>
</dbReference>
<dbReference type="SUPFAM" id="SSF54570">
    <property type="entry name" value="Ribosomal protein S19"/>
    <property type="match status" value="1"/>
</dbReference>
<dbReference type="PROSITE" id="PS00323">
    <property type="entry name" value="RIBOSOMAL_S19"/>
    <property type="match status" value="1"/>
</dbReference>
<name>RS19_COXB2</name>
<accession>B6J259</accession>
<reference key="1">
    <citation type="journal article" date="2009" name="Infect. Immun.">
        <title>Comparative genomics reveal extensive transposon-mediated genomic plasticity and diversity among potential effector proteins within the genus Coxiella.</title>
        <authorList>
            <person name="Beare P.A."/>
            <person name="Unsworth N."/>
            <person name="Andoh M."/>
            <person name="Voth D.E."/>
            <person name="Omsland A."/>
            <person name="Gilk S.D."/>
            <person name="Williams K.P."/>
            <person name="Sobral B.W."/>
            <person name="Kupko J.J. III"/>
            <person name="Porcella S.F."/>
            <person name="Samuel J.E."/>
            <person name="Heinzen R.A."/>
        </authorList>
    </citation>
    <scope>NUCLEOTIDE SEQUENCE [LARGE SCALE GENOMIC DNA]</scope>
    <source>
        <strain>CbuG_Q212</strain>
    </source>
</reference>
<protein>
    <recommendedName>
        <fullName evidence="1">Small ribosomal subunit protein uS19</fullName>
    </recommendedName>
    <alternativeName>
        <fullName evidence="2">30S ribosomal protein S19</fullName>
    </alternativeName>
</protein>
<gene>
    <name evidence="1" type="primary">rpsS</name>
    <name type="ordered locus">CbuG_1763</name>
</gene>
<feature type="chain" id="PRO_1000127957" description="Small ribosomal subunit protein uS19">
    <location>
        <begin position="1"/>
        <end position="95"/>
    </location>
</feature>
<sequence>MPRSTNKGPFVDHHLMKKVDQAQKEGSKRPIKTWSRRSMVVPEMVGLTIAIHNGRQHVPVYISENMVGHKLGEFAITRTFRAHSGDRKAKKEGEK</sequence>
<comment type="function">
    <text evidence="1">Protein S19 forms a complex with S13 that binds strongly to the 16S ribosomal RNA.</text>
</comment>
<comment type="similarity">
    <text evidence="1">Belongs to the universal ribosomal protein uS19 family.</text>
</comment>
<organism>
    <name type="scientific">Coxiella burnetii (strain CbuG_Q212)</name>
    <name type="common">Coxiella burnetii (strain Q212)</name>
    <dbReference type="NCBI Taxonomy" id="434923"/>
    <lineage>
        <taxon>Bacteria</taxon>
        <taxon>Pseudomonadati</taxon>
        <taxon>Pseudomonadota</taxon>
        <taxon>Gammaproteobacteria</taxon>
        <taxon>Legionellales</taxon>
        <taxon>Coxiellaceae</taxon>
        <taxon>Coxiella</taxon>
    </lineage>
</organism>
<evidence type="ECO:0000255" key="1">
    <source>
        <dbReference type="HAMAP-Rule" id="MF_00531"/>
    </source>
</evidence>
<evidence type="ECO:0000305" key="2"/>